<proteinExistence type="inferred from homology"/>
<gene>
    <name evidence="1" type="primary">coaE</name>
    <name type="ordered locus">SERP1252</name>
</gene>
<dbReference type="EC" id="2.7.1.24" evidence="1"/>
<dbReference type="EMBL" id="CP000029">
    <property type="protein sequence ID" value="AAW54616.1"/>
    <property type="molecule type" value="Genomic_DNA"/>
</dbReference>
<dbReference type="RefSeq" id="WP_001830774.1">
    <property type="nucleotide sequence ID" value="NC_002976.3"/>
</dbReference>
<dbReference type="SMR" id="Q5HNL6"/>
<dbReference type="STRING" id="176279.SERP1252"/>
<dbReference type="KEGG" id="ser:SERP1252"/>
<dbReference type="eggNOG" id="COG0237">
    <property type="taxonomic scope" value="Bacteria"/>
</dbReference>
<dbReference type="HOGENOM" id="CLU_057180_0_0_9"/>
<dbReference type="UniPathway" id="UPA00241">
    <property type="reaction ID" value="UER00356"/>
</dbReference>
<dbReference type="Proteomes" id="UP000000531">
    <property type="component" value="Chromosome"/>
</dbReference>
<dbReference type="GO" id="GO:0005737">
    <property type="term" value="C:cytoplasm"/>
    <property type="evidence" value="ECO:0007669"/>
    <property type="project" value="UniProtKB-SubCell"/>
</dbReference>
<dbReference type="GO" id="GO:0005524">
    <property type="term" value="F:ATP binding"/>
    <property type="evidence" value="ECO:0007669"/>
    <property type="project" value="UniProtKB-UniRule"/>
</dbReference>
<dbReference type="GO" id="GO:0004140">
    <property type="term" value="F:dephospho-CoA kinase activity"/>
    <property type="evidence" value="ECO:0007669"/>
    <property type="project" value="UniProtKB-UniRule"/>
</dbReference>
<dbReference type="GO" id="GO:0015937">
    <property type="term" value="P:coenzyme A biosynthetic process"/>
    <property type="evidence" value="ECO:0007669"/>
    <property type="project" value="UniProtKB-UniRule"/>
</dbReference>
<dbReference type="CDD" id="cd02022">
    <property type="entry name" value="DPCK"/>
    <property type="match status" value="1"/>
</dbReference>
<dbReference type="FunFam" id="3.40.50.300:FF:000991">
    <property type="entry name" value="Dephospho-CoA kinase"/>
    <property type="match status" value="1"/>
</dbReference>
<dbReference type="Gene3D" id="3.40.50.300">
    <property type="entry name" value="P-loop containing nucleotide triphosphate hydrolases"/>
    <property type="match status" value="1"/>
</dbReference>
<dbReference type="HAMAP" id="MF_00376">
    <property type="entry name" value="Dephospho_CoA_kinase"/>
    <property type="match status" value="1"/>
</dbReference>
<dbReference type="InterPro" id="IPR001977">
    <property type="entry name" value="Depp_CoAkinase"/>
</dbReference>
<dbReference type="InterPro" id="IPR027417">
    <property type="entry name" value="P-loop_NTPase"/>
</dbReference>
<dbReference type="NCBIfam" id="TIGR00152">
    <property type="entry name" value="dephospho-CoA kinase"/>
    <property type="match status" value="1"/>
</dbReference>
<dbReference type="PANTHER" id="PTHR10695:SF46">
    <property type="entry name" value="BIFUNCTIONAL COENZYME A SYNTHASE-RELATED"/>
    <property type="match status" value="1"/>
</dbReference>
<dbReference type="PANTHER" id="PTHR10695">
    <property type="entry name" value="DEPHOSPHO-COA KINASE-RELATED"/>
    <property type="match status" value="1"/>
</dbReference>
<dbReference type="Pfam" id="PF01121">
    <property type="entry name" value="CoaE"/>
    <property type="match status" value="1"/>
</dbReference>
<dbReference type="SUPFAM" id="SSF52540">
    <property type="entry name" value="P-loop containing nucleoside triphosphate hydrolases"/>
    <property type="match status" value="1"/>
</dbReference>
<dbReference type="PROSITE" id="PS51219">
    <property type="entry name" value="DPCK"/>
    <property type="match status" value="1"/>
</dbReference>
<accession>Q5HNL6</accession>
<sequence>MSKVIGITGGIATGKSTVSELLTAYGFKIVDADIASREAVKKGSKGLEQVKEIFGEEAIDENGEMNRQYVGEIVFNHPDLREALNEIVHPIVREIMEQEKNNYLEHGYHVIMDIPLLYENELQDTVDEVWVVYTSESIQIDRLMERNNLSLEDAKARVYSQISIDKKSRMADHVIDNLGDKLELKQNLQKLLEEEGYIQSESE</sequence>
<reference key="1">
    <citation type="journal article" date="2005" name="J. Bacteriol.">
        <title>Insights on evolution of virulence and resistance from the complete genome analysis of an early methicillin-resistant Staphylococcus aureus strain and a biofilm-producing methicillin-resistant Staphylococcus epidermidis strain.</title>
        <authorList>
            <person name="Gill S.R."/>
            <person name="Fouts D.E."/>
            <person name="Archer G.L."/>
            <person name="Mongodin E.F."/>
            <person name="DeBoy R.T."/>
            <person name="Ravel J."/>
            <person name="Paulsen I.T."/>
            <person name="Kolonay J.F."/>
            <person name="Brinkac L.M."/>
            <person name="Beanan M.J."/>
            <person name="Dodson R.J."/>
            <person name="Daugherty S.C."/>
            <person name="Madupu R."/>
            <person name="Angiuoli S.V."/>
            <person name="Durkin A.S."/>
            <person name="Haft D.H."/>
            <person name="Vamathevan J.J."/>
            <person name="Khouri H."/>
            <person name="Utterback T.R."/>
            <person name="Lee C."/>
            <person name="Dimitrov G."/>
            <person name="Jiang L."/>
            <person name="Qin H."/>
            <person name="Weidman J."/>
            <person name="Tran K."/>
            <person name="Kang K.H."/>
            <person name="Hance I.R."/>
            <person name="Nelson K.E."/>
            <person name="Fraser C.M."/>
        </authorList>
    </citation>
    <scope>NUCLEOTIDE SEQUENCE [LARGE SCALE GENOMIC DNA]</scope>
    <source>
        <strain>ATCC 35984 / DSM 28319 / BCRC 17069 / CCUG 31568 / BM 3577 / RP62A</strain>
    </source>
</reference>
<protein>
    <recommendedName>
        <fullName evidence="1">Dephospho-CoA kinase</fullName>
        <ecNumber evidence="1">2.7.1.24</ecNumber>
    </recommendedName>
    <alternativeName>
        <fullName evidence="1">Dephosphocoenzyme A kinase</fullName>
    </alternativeName>
</protein>
<name>COAE_STAEQ</name>
<keyword id="KW-0067">ATP-binding</keyword>
<keyword id="KW-0173">Coenzyme A biosynthesis</keyword>
<keyword id="KW-0963">Cytoplasm</keyword>
<keyword id="KW-0418">Kinase</keyword>
<keyword id="KW-0547">Nucleotide-binding</keyword>
<keyword id="KW-1185">Reference proteome</keyword>
<keyword id="KW-0808">Transferase</keyword>
<evidence type="ECO:0000255" key="1">
    <source>
        <dbReference type="HAMAP-Rule" id="MF_00376"/>
    </source>
</evidence>
<feature type="chain" id="PRO_0000173004" description="Dephospho-CoA kinase">
    <location>
        <begin position="1"/>
        <end position="203"/>
    </location>
</feature>
<feature type="domain" description="DPCK" evidence="1">
    <location>
        <begin position="4"/>
        <end position="203"/>
    </location>
</feature>
<feature type="binding site" evidence="1">
    <location>
        <begin position="12"/>
        <end position="17"/>
    </location>
    <ligand>
        <name>ATP</name>
        <dbReference type="ChEBI" id="CHEBI:30616"/>
    </ligand>
</feature>
<comment type="function">
    <text evidence="1">Catalyzes the phosphorylation of the 3'-hydroxyl group of dephosphocoenzyme A to form coenzyme A.</text>
</comment>
<comment type="catalytic activity">
    <reaction evidence="1">
        <text>3'-dephospho-CoA + ATP = ADP + CoA + H(+)</text>
        <dbReference type="Rhea" id="RHEA:18245"/>
        <dbReference type="ChEBI" id="CHEBI:15378"/>
        <dbReference type="ChEBI" id="CHEBI:30616"/>
        <dbReference type="ChEBI" id="CHEBI:57287"/>
        <dbReference type="ChEBI" id="CHEBI:57328"/>
        <dbReference type="ChEBI" id="CHEBI:456216"/>
        <dbReference type="EC" id="2.7.1.24"/>
    </reaction>
</comment>
<comment type="pathway">
    <text evidence="1">Cofactor biosynthesis; coenzyme A biosynthesis; CoA from (R)-pantothenate: step 5/5.</text>
</comment>
<comment type="subcellular location">
    <subcellularLocation>
        <location evidence="1">Cytoplasm</location>
    </subcellularLocation>
</comment>
<comment type="similarity">
    <text evidence="1">Belongs to the CoaE family.</text>
</comment>
<organism>
    <name type="scientific">Staphylococcus epidermidis (strain ATCC 35984 / DSM 28319 / BCRC 17069 / CCUG 31568 / BM 3577 / RP62A)</name>
    <dbReference type="NCBI Taxonomy" id="176279"/>
    <lineage>
        <taxon>Bacteria</taxon>
        <taxon>Bacillati</taxon>
        <taxon>Bacillota</taxon>
        <taxon>Bacilli</taxon>
        <taxon>Bacillales</taxon>
        <taxon>Staphylococcaceae</taxon>
        <taxon>Staphylococcus</taxon>
    </lineage>
</organism>